<gene>
    <name type="primary">ROPGAP5</name>
    <name type="ordered locus">At1g08340</name>
    <name type="ORF">T27G7.4</name>
</gene>
<feature type="chain" id="PRO_0000422720" description="Rho GTPase-activating protein 5">
    <location>
        <begin position="1"/>
        <end position="331"/>
    </location>
</feature>
<feature type="domain" description="CRIB" evidence="2">
    <location>
        <begin position="3"/>
        <end position="16"/>
    </location>
</feature>
<feature type="domain" description="Rho-GAP" evidence="3">
    <location>
        <begin position="48"/>
        <end position="225"/>
    </location>
</feature>
<feature type="region of interest" description="Disordered" evidence="4">
    <location>
        <begin position="227"/>
        <end position="331"/>
    </location>
</feature>
<feature type="compositionally biased region" description="Basic and acidic residues" evidence="4">
    <location>
        <begin position="227"/>
        <end position="251"/>
    </location>
</feature>
<feature type="compositionally biased region" description="Acidic residues" evidence="4">
    <location>
        <begin position="252"/>
        <end position="277"/>
    </location>
</feature>
<feature type="site" description="Arginine finger; crucial for GTP hydrolysis by stabilizing the transition state" evidence="3">
    <location>
        <position position="88"/>
    </location>
</feature>
<evidence type="ECO:0000250" key="1"/>
<evidence type="ECO:0000255" key="2">
    <source>
        <dbReference type="PROSITE-ProRule" id="PRU00057"/>
    </source>
</evidence>
<evidence type="ECO:0000255" key="3">
    <source>
        <dbReference type="PROSITE-ProRule" id="PRU00172"/>
    </source>
</evidence>
<evidence type="ECO:0000256" key="4">
    <source>
        <dbReference type="SAM" id="MobiDB-lite"/>
    </source>
</evidence>
<evidence type="ECO:0000269" key="5">
    <source>
    </source>
</evidence>
<evidence type="ECO:0000305" key="6"/>
<evidence type="ECO:0000305" key="7">
    <source>
    </source>
</evidence>
<name>RGAP5_ARATH</name>
<protein>
    <recommendedName>
        <fullName>Rho GTPase-activating protein 5</fullName>
    </recommendedName>
    <alternativeName>
        <fullName>Rho-type GTPase-activating protein 5</fullName>
    </alternativeName>
</protein>
<comment type="function">
    <text evidence="1">Acts as a GTPase activator for the Rac-type GTPase by converting it to an inactive GDP-bound state.</text>
</comment>
<comment type="subcellular location">
    <subcellularLocation>
        <location evidence="7">Cell membrane</location>
        <topology evidence="7">Peripheral membrane protein</topology>
    </subcellularLocation>
</comment>
<comment type="tissue specificity">
    <text evidence="5">Expressed in differentiating xylem cells.</text>
</comment>
<comment type="sequence caution" evidence="6">
    <conflict type="erroneous gene model prediction">
        <sequence resource="EMBL-CDS" id="AAF18245"/>
    </conflict>
</comment>
<comment type="sequence caution" evidence="6">
    <conflict type="erroneous gene model prediction">
        <sequence resource="EMBL-CDS" id="AAF22885"/>
    </conflict>
</comment>
<organism>
    <name type="scientific">Arabidopsis thaliana</name>
    <name type="common">Mouse-ear cress</name>
    <dbReference type="NCBI Taxonomy" id="3702"/>
    <lineage>
        <taxon>Eukaryota</taxon>
        <taxon>Viridiplantae</taxon>
        <taxon>Streptophyta</taxon>
        <taxon>Embryophyta</taxon>
        <taxon>Tracheophyta</taxon>
        <taxon>Spermatophyta</taxon>
        <taxon>Magnoliopsida</taxon>
        <taxon>eudicotyledons</taxon>
        <taxon>Gunneridae</taxon>
        <taxon>Pentapetalae</taxon>
        <taxon>rosids</taxon>
        <taxon>malvids</taxon>
        <taxon>Brassicales</taxon>
        <taxon>Brassicaceae</taxon>
        <taxon>Camelineae</taxon>
        <taxon>Arabidopsis</taxon>
    </lineage>
</organism>
<accession>Q6NKT5</accession>
<accession>Q9SGC6</accession>
<accession>Q9SJF6</accession>
<proteinExistence type="evidence at transcript level"/>
<dbReference type="EMBL" id="AC006932">
    <property type="protein sequence ID" value="AAF22885.1"/>
    <property type="status" value="ALT_SEQ"/>
    <property type="molecule type" value="Genomic_DNA"/>
</dbReference>
<dbReference type="EMBL" id="AC011438">
    <property type="protein sequence ID" value="AAF18245.1"/>
    <property type="status" value="ALT_SEQ"/>
    <property type="molecule type" value="Genomic_DNA"/>
</dbReference>
<dbReference type="EMBL" id="CP002684">
    <property type="protein sequence ID" value="AEE28278.1"/>
    <property type="molecule type" value="Genomic_DNA"/>
</dbReference>
<dbReference type="EMBL" id="BT012608">
    <property type="protein sequence ID" value="AAT06427.1"/>
    <property type="molecule type" value="mRNA"/>
</dbReference>
<dbReference type="EMBL" id="BT014961">
    <property type="protein sequence ID" value="AAT47812.1"/>
    <property type="molecule type" value="mRNA"/>
</dbReference>
<dbReference type="EMBL" id="AK228173">
    <property type="protein sequence ID" value="BAF00129.1"/>
    <property type="molecule type" value="mRNA"/>
</dbReference>
<dbReference type="PIR" id="B86217">
    <property type="entry name" value="B86217"/>
</dbReference>
<dbReference type="RefSeq" id="NP_172310.1">
    <property type="nucleotide sequence ID" value="NM_100707.4"/>
</dbReference>
<dbReference type="SMR" id="Q6NKT5"/>
<dbReference type="FunCoup" id="Q6NKT5">
    <property type="interactions" value="279"/>
</dbReference>
<dbReference type="STRING" id="3702.Q6NKT5"/>
<dbReference type="PaxDb" id="3702-AT1G08340.1"/>
<dbReference type="ProteomicsDB" id="236999"/>
<dbReference type="EnsemblPlants" id="AT1G08340.1">
    <property type="protein sequence ID" value="AT1G08340.1"/>
    <property type="gene ID" value="AT1G08340"/>
</dbReference>
<dbReference type="GeneID" id="837354"/>
<dbReference type="Gramene" id="AT1G08340.1">
    <property type="protein sequence ID" value="AT1G08340.1"/>
    <property type="gene ID" value="AT1G08340"/>
</dbReference>
<dbReference type="KEGG" id="ath:AT1G08340"/>
<dbReference type="Araport" id="AT1G08340"/>
<dbReference type="TAIR" id="AT1G08340"/>
<dbReference type="eggNOG" id="KOG4270">
    <property type="taxonomic scope" value="Eukaryota"/>
</dbReference>
<dbReference type="HOGENOM" id="CLU_031591_2_0_1"/>
<dbReference type="InParanoid" id="Q6NKT5"/>
<dbReference type="OMA" id="MQCESDE"/>
<dbReference type="OrthoDB" id="185175at2759"/>
<dbReference type="PhylomeDB" id="Q6NKT5"/>
<dbReference type="PRO" id="PR:Q6NKT5"/>
<dbReference type="Proteomes" id="UP000006548">
    <property type="component" value="Chromosome 1"/>
</dbReference>
<dbReference type="ExpressionAtlas" id="Q6NKT5">
    <property type="expression patterns" value="baseline and differential"/>
</dbReference>
<dbReference type="GO" id="GO:0005886">
    <property type="term" value="C:plasma membrane"/>
    <property type="evidence" value="ECO:0000314"/>
    <property type="project" value="UniProtKB"/>
</dbReference>
<dbReference type="GO" id="GO:0005096">
    <property type="term" value="F:GTPase activator activity"/>
    <property type="evidence" value="ECO:0007669"/>
    <property type="project" value="UniProtKB-KW"/>
</dbReference>
<dbReference type="GO" id="GO:0007165">
    <property type="term" value="P:signal transduction"/>
    <property type="evidence" value="ECO:0007669"/>
    <property type="project" value="InterPro"/>
</dbReference>
<dbReference type="CDD" id="cd00132">
    <property type="entry name" value="CRIB"/>
    <property type="match status" value="1"/>
</dbReference>
<dbReference type="CDD" id="cd00159">
    <property type="entry name" value="RhoGAP"/>
    <property type="match status" value="1"/>
</dbReference>
<dbReference type="FunFam" id="1.10.555.10:FF:000046">
    <property type="entry name" value="Rho GTPase-activating protein 5"/>
    <property type="match status" value="1"/>
</dbReference>
<dbReference type="Gene3D" id="3.90.810.10">
    <property type="entry name" value="CRIB domain"/>
    <property type="match status" value="1"/>
</dbReference>
<dbReference type="Gene3D" id="1.10.555.10">
    <property type="entry name" value="Rho GTPase activation protein"/>
    <property type="match status" value="1"/>
</dbReference>
<dbReference type="InterPro" id="IPR000095">
    <property type="entry name" value="CRIB_dom"/>
</dbReference>
<dbReference type="InterPro" id="IPR036936">
    <property type="entry name" value="CRIB_dom_sf"/>
</dbReference>
<dbReference type="InterPro" id="IPR008936">
    <property type="entry name" value="Rho_GTPase_activation_prot"/>
</dbReference>
<dbReference type="InterPro" id="IPR000198">
    <property type="entry name" value="RhoGAP_dom"/>
</dbReference>
<dbReference type="InterPro" id="IPR044785">
    <property type="entry name" value="RopGAP1-5"/>
</dbReference>
<dbReference type="PANTHER" id="PTHR23177">
    <property type="entry name" value="MKIAA1688 PROTEIN"/>
    <property type="match status" value="1"/>
</dbReference>
<dbReference type="PANTHER" id="PTHR23177:SF57">
    <property type="entry name" value="RHO GTPASE-ACTIVATING PROTEIN 5"/>
    <property type="match status" value="1"/>
</dbReference>
<dbReference type="Pfam" id="PF00786">
    <property type="entry name" value="PBD"/>
    <property type="match status" value="1"/>
</dbReference>
<dbReference type="Pfam" id="PF00620">
    <property type="entry name" value="RhoGAP"/>
    <property type="match status" value="1"/>
</dbReference>
<dbReference type="SMART" id="SM00285">
    <property type="entry name" value="PBD"/>
    <property type="match status" value="1"/>
</dbReference>
<dbReference type="SMART" id="SM00324">
    <property type="entry name" value="RhoGAP"/>
    <property type="match status" value="1"/>
</dbReference>
<dbReference type="SUPFAM" id="SSF48350">
    <property type="entry name" value="GTPase activation domain, GAP"/>
    <property type="match status" value="1"/>
</dbReference>
<dbReference type="PROSITE" id="PS50108">
    <property type="entry name" value="CRIB"/>
    <property type="match status" value="1"/>
</dbReference>
<dbReference type="PROSITE" id="PS50238">
    <property type="entry name" value="RHOGAP"/>
    <property type="match status" value="1"/>
</dbReference>
<reference key="1">
    <citation type="journal article" date="2000" name="Nature">
        <title>Sequence and analysis of chromosome 1 of the plant Arabidopsis thaliana.</title>
        <authorList>
            <person name="Theologis A."/>
            <person name="Ecker J.R."/>
            <person name="Palm C.J."/>
            <person name="Federspiel N.A."/>
            <person name="Kaul S."/>
            <person name="White O."/>
            <person name="Alonso J."/>
            <person name="Altafi H."/>
            <person name="Araujo R."/>
            <person name="Bowman C.L."/>
            <person name="Brooks S.Y."/>
            <person name="Buehler E."/>
            <person name="Chan A."/>
            <person name="Chao Q."/>
            <person name="Chen H."/>
            <person name="Cheuk R.F."/>
            <person name="Chin C.W."/>
            <person name="Chung M.K."/>
            <person name="Conn L."/>
            <person name="Conway A.B."/>
            <person name="Conway A.R."/>
            <person name="Creasy T.H."/>
            <person name="Dewar K."/>
            <person name="Dunn P."/>
            <person name="Etgu P."/>
            <person name="Feldblyum T.V."/>
            <person name="Feng J.-D."/>
            <person name="Fong B."/>
            <person name="Fujii C.Y."/>
            <person name="Gill J.E."/>
            <person name="Goldsmith A.D."/>
            <person name="Haas B."/>
            <person name="Hansen N.F."/>
            <person name="Hughes B."/>
            <person name="Huizar L."/>
            <person name="Hunter J.L."/>
            <person name="Jenkins J."/>
            <person name="Johnson-Hopson C."/>
            <person name="Khan S."/>
            <person name="Khaykin E."/>
            <person name="Kim C.J."/>
            <person name="Koo H.L."/>
            <person name="Kremenetskaia I."/>
            <person name="Kurtz D.B."/>
            <person name="Kwan A."/>
            <person name="Lam B."/>
            <person name="Langin-Hooper S."/>
            <person name="Lee A."/>
            <person name="Lee J.M."/>
            <person name="Lenz C.A."/>
            <person name="Li J.H."/>
            <person name="Li Y.-P."/>
            <person name="Lin X."/>
            <person name="Liu S.X."/>
            <person name="Liu Z.A."/>
            <person name="Luros J.S."/>
            <person name="Maiti R."/>
            <person name="Marziali A."/>
            <person name="Militscher J."/>
            <person name="Miranda M."/>
            <person name="Nguyen M."/>
            <person name="Nierman W.C."/>
            <person name="Osborne B.I."/>
            <person name="Pai G."/>
            <person name="Peterson J."/>
            <person name="Pham P.K."/>
            <person name="Rizzo M."/>
            <person name="Rooney T."/>
            <person name="Rowley D."/>
            <person name="Sakano H."/>
            <person name="Salzberg S.L."/>
            <person name="Schwartz J.R."/>
            <person name="Shinn P."/>
            <person name="Southwick A.M."/>
            <person name="Sun H."/>
            <person name="Tallon L.J."/>
            <person name="Tambunga G."/>
            <person name="Toriumi M.J."/>
            <person name="Town C.D."/>
            <person name="Utterback T."/>
            <person name="Van Aken S."/>
            <person name="Vaysberg M."/>
            <person name="Vysotskaia V.S."/>
            <person name="Walker M."/>
            <person name="Wu D."/>
            <person name="Yu G."/>
            <person name="Fraser C.M."/>
            <person name="Venter J.C."/>
            <person name="Davis R.W."/>
        </authorList>
    </citation>
    <scope>NUCLEOTIDE SEQUENCE [LARGE SCALE GENOMIC DNA]</scope>
    <source>
        <strain>cv. Columbia</strain>
    </source>
</reference>
<reference key="2">
    <citation type="journal article" date="2017" name="Plant J.">
        <title>Araport11: a complete reannotation of the Arabidopsis thaliana reference genome.</title>
        <authorList>
            <person name="Cheng C.Y."/>
            <person name="Krishnakumar V."/>
            <person name="Chan A.P."/>
            <person name="Thibaud-Nissen F."/>
            <person name="Schobel S."/>
            <person name="Town C.D."/>
        </authorList>
    </citation>
    <scope>GENOME REANNOTATION</scope>
    <source>
        <strain>cv. Columbia</strain>
    </source>
</reference>
<reference key="3">
    <citation type="submission" date="2004-06" db="EMBL/GenBank/DDBJ databases">
        <title>Arabidopsis ORF clones.</title>
        <authorList>
            <person name="Cheuk R.F."/>
            <person name="Chen H."/>
            <person name="Kim C.J."/>
            <person name="Shinn P."/>
            <person name="Ecker J.R."/>
        </authorList>
    </citation>
    <scope>NUCLEOTIDE SEQUENCE [LARGE SCALE MRNA]</scope>
    <source>
        <strain>cv. Columbia</strain>
    </source>
</reference>
<reference key="4">
    <citation type="submission" date="2006-07" db="EMBL/GenBank/DDBJ databases">
        <title>Large-scale analysis of RIKEN Arabidopsis full-length (RAFL) cDNAs.</title>
        <authorList>
            <person name="Totoki Y."/>
            <person name="Seki M."/>
            <person name="Ishida J."/>
            <person name="Nakajima M."/>
            <person name="Enju A."/>
            <person name="Kamiya A."/>
            <person name="Narusaka M."/>
            <person name="Shin-i T."/>
            <person name="Nakagawa M."/>
            <person name="Sakamoto N."/>
            <person name="Oishi K."/>
            <person name="Kohara Y."/>
            <person name="Kobayashi M."/>
            <person name="Toyoda A."/>
            <person name="Sakaki Y."/>
            <person name="Sakurai T."/>
            <person name="Iida K."/>
            <person name="Akiyama K."/>
            <person name="Satou M."/>
            <person name="Toyoda T."/>
            <person name="Konagaya A."/>
            <person name="Carninci P."/>
            <person name="Kawai J."/>
            <person name="Hayashizaki Y."/>
            <person name="Shinozaki K."/>
        </authorList>
    </citation>
    <scope>NUCLEOTIDE SEQUENCE [LARGE SCALE MRNA]</scope>
    <source>
        <strain>cv. Columbia</strain>
    </source>
</reference>
<reference key="5">
    <citation type="journal article" date="2012" name="Science">
        <title>Initiation of cell wall pattern by a Rho- and microtubule-driven symmetry breaking.</title>
        <authorList>
            <person name="Oda Y."/>
            <person name="Fukuda H."/>
        </authorList>
    </citation>
    <scope>SUBCELLULAR LOCATION</scope>
    <scope>TISSUE SPECIFICITY</scope>
</reference>
<keyword id="KW-1003">Cell membrane</keyword>
<keyword id="KW-0343">GTPase activation</keyword>
<keyword id="KW-0472">Membrane</keyword>
<keyword id="KW-1185">Reference proteome</keyword>
<sequence length="331" mass="36830">MDIGGPTNIRHVAHVTFDRFDGFLGLPSEFEPDVPRKAPSASATVFGVSTESMQLSYDSRGNCVPVILLLLQSRLYDQGGLQAEGVFRITGENSEEEFVREQLNKGIIPDGIDVHCLAGLIKAWFRELPRGVLDPLPSEQVMQCESDEDFVKVVRLLPQTEASLLNWAINLMADVIQFEHVNKMNSRNLALVFAPNMSQMADPLTALMYAVQVMKLLKSLTEKTVREREASSSVVDRRCSKEAEDGEKEKDNEEEEEDEEEEEEEEDEDEDEEEEGDGVYIIKEEEASEIIKVVADEHKSGSIKSEFEGSSATDSKGDNGVVQPPICSSNP</sequence>